<accession>Q5RAV7</accession>
<organism>
    <name type="scientific">Pongo abelii</name>
    <name type="common">Sumatran orangutan</name>
    <name type="synonym">Pongo pygmaeus abelii</name>
    <dbReference type="NCBI Taxonomy" id="9601"/>
    <lineage>
        <taxon>Eukaryota</taxon>
        <taxon>Metazoa</taxon>
        <taxon>Chordata</taxon>
        <taxon>Craniata</taxon>
        <taxon>Vertebrata</taxon>
        <taxon>Euteleostomi</taxon>
        <taxon>Mammalia</taxon>
        <taxon>Eutheria</taxon>
        <taxon>Euarchontoglires</taxon>
        <taxon>Primates</taxon>
        <taxon>Haplorrhini</taxon>
        <taxon>Catarrhini</taxon>
        <taxon>Hominidae</taxon>
        <taxon>Pongo</taxon>
    </lineage>
</organism>
<protein>
    <recommendedName>
        <fullName evidence="5">Caspase recruitment domain-containing protein 8</fullName>
        <ecNumber evidence="1">3.4.-.-</ecNumber>
    </recommendedName>
    <component>
        <recommendedName>
            <fullName evidence="5">Caspase recruitment domain-containing protein 8, C-terminus</fullName>
            <shortName evidence="1">CARD8-CT</shortName>
        </recommendedName>
    </component>
    <component>
        <recommendedName>
            <fullName evidence="5">Caspase recruitment domain-containing protein 8, N-terminus</fullName>
            <shortName evidence="1">CARD8-NT</shortName>
        </recommendedName>
    </component>
</protein>
<comment type="function">
    <text evidence="1">Inflammasome sensor, which mediates inflammasome activation in response to various pathogen-associated signals, leading to subsequent pyroptosis of CD4(+) T-cells and macrophages. Inflammasomes are supramolecular complexes that assemble in the cytosol in response to pathogens and other damage-associated signals and play critical roles in innate immunity and inflammation. Acts as a recognition receptor (PRR): recognizes specific pathogens and other damage-associated signals, such as Val-boroPro inhibitor, and mediates CARD8 inflammasome activation. In response to pathogen-associated signals, the N-terminal part of CARD8 is degraded by the proteasome, releasing the cleaved C-terminal part of the protein (Caspase recruitment domain-containing protein 8, C-terminus), which polymerizes to initiate the formation of the inflammasome complex: the CARD8 inflammasome directly recruits pro-caspase-1 (proCASP1) independently of PYCARD/ASC and promotes caspase-1 (CASP1) activation, which subsequently cleaves and activates inflammatory cytokines IL1B and IL18 and gasdermin-D (GSDMD), leading to pyroptosis. Also acts as a negative regulator of the NLRP3 inflammasome. May also act as an inhibitor of NF-kappa-B activation.</text>
</comment>
<comment type="function">
    <molecule>Caspase recruitment domain-containing protein 8</molecule>
    <text evidence="1">Constitutes the precursor of the CARD8 inflammasome, which mediates autoproteolytic processing within the FIIND domain to generate the N-terminal and C-terminal parts, which are associated non-covalently in absence of pathogens and other damage-associated signals.</text>
</comment>
<comment type="function">
    <molecule>Caspase recruitment domain-containing protein 8, N-terminus</molecule>
    <text evidence="1">Regulatory part that prevents formation of the CARD8 inflammasome: in absence of pathogens and other damage-associated signals, interacts with the C-terminal part of CARD8 (Caspase recruitment domain-containing protein 8, C-terminus), preventing activation of the CARD8 inflammasome. In response to pathogen-associated signals, this part is ubiquitinated by the N-end rule pathway and degraded by the proteasome, releasing the cleaved C-terminal part of the protein, which polymerizes and forms the CARD8 inflammasome.</text>
</comment>
<comment type="function">
    <molecule>Caspase recruitment domain-containing protein 8, C-terminus</molecule>
    <text evidence="1">Constitutes the active part of the CARD8 inflammasome. In absence of pathogens and other damage-associated signals, interacts with the N-terminal part of CARD8 (Caspase recruitment domain-containing protein 8, N-terminus), preventing activation of the CARD8 inflammasome. In response to pathogen-associated signals, the N-terminal part of CARD8 is degraded by the proteasome, releasing this form, which polymerizes to form the CARD8 inflammasome complex: the CARD8 inflammasome complex then directly recruits pro-caspase-1 (proCASP1) and promotes caspase-1 (CASP1) activation, leading to gasdermin-D (GSDMD) cleavage and subsequent pyroptosis.</text>
</comment>
<comment type="activity regulation">
    <text evidence="1">CARD8 inflammasome is inhibited by DPP8 and DPP9, which sequester the C-terminal fragment of CARD8 (Caspase recruitment domain-containing protein 8, C-terminus) in a ternary complex, thereby preventing CARD8 oligomerization and activation. CARD8 inflammasome is activated by Val-boroPro (Talabostat, PT-100), an inhibitor of dipeptidyl peptidases DPP8 and DPP9. Val-boroPro relieves inhibition of DPP8 and/or DPP9 by inducing the proteasome-mediated destruction of the N-terminal part of CARD8, releasing its C-terminal part from autoinhibition.</text>
</comment>
<comment type="subunit">
    <text evidence="1">Interacts with DPP9; leading to inhibit activation of the inflammasome. DPP9 acts via formation of a ternary complex, composed of a DPP9 homodimer, one full-length CARD8 protein, and one cleaved C-terminus of CARD8 (Caspase recruitment domain-containing protein 8, C-terminus). Interacts with DPP8; leading to inhibit activation of the inflammasome, probably via formation of a ternary complex with DPP8. Interacts with NLRP3. Interacts with IKBKG/NEMO. Interacts with DRAL. Binds to caspase-1 (CASP1), CARD16/pseudo-ICE and CARD18/ICEBERG. Interacts with NLRP2 (via NACHT domain).</text>
</comment>
<comment type="subunit">
    <molecule>Caspase recruitment domain-containing protein 8, N-terminus</molecule>
    <text evidence="1">Interacts with the C-terminal part of CARD8 (Caspase recruitment domain-containing protein 8, C-terminus) in absence of pathogens and other damage-associated signals.</text>
</comment>
<comment type="subunit">
    <molecule>Caspase recruitment domain-containing protein 8, C-terminus</molecule>
    <text evidence="1">Interacts with the N-terminal part of CARD8 (Caspase recruitment domain-containing protein 8, N-terminus) in absence of pathogens and other damage-associated signals. Homomultimer; forms the CARD8 inflammasome polymeric complex, a filament composed of homopolymers of this form in response to pathogens and other damage-associated signals. The CARD8 inflammasome polymeric complex directly recruits pro-caspase-1 (proCASP1) independently of PYCARD/ASC. Interacts (via CARD domain) with CASP1 (via CARD domain); leading to CASP1 activation.</text>
</comment>
<comment type="subcellular location">
    <subcellularLocation>
        <location evidence="1">Cytoplasm</location>
    </subcellularLocation>
    <subcellularLocation>
        <location evidence="1">Nucleus</location>
    </subcellularLocation>
</comment>
<comment type="subcellular location">
    <molecule>Caspase recruitment domain-containing protein 8, C-terminus</molecule>
    <subcellularLocation>
        <location evidence="1">Inflammasome</location>
    </subcellularLocation>
</comment>
<comment type="domain">
    <text evidence="1">The disordered region is required for activation of the CARD8 inflammasome.</text>
</comment>
<comment type="domain">
    <molecule>Caspase recruitment domain-containing protein 8, C-terminus</molecule>
    <text evidence="1">The C-terminal part of CARD8 oligomerizes to form the core of the CARD8 inflammasome filament: in the filament, the CARD domains form a central helical filaments that are promoted by oligomerized, but flexibly linked, UPA regions surrounding the filaments. The UPA region reduces the threshold needed for filament formation and signaling. Directly recruits and polymerizes with the CARD domain of caspase-1 (CASP1) through the favorable side of the growing filament seed.</text>
</comment>
<comment type="PTM">
    <molecule>Caspase recruitment domain-containing protein 8</molecule>
    <text evidence="1">Undergoes autocatalytic processing within the FIIND domain to generate the N-terminal and C-terminal parts, which are associated non-covalently in absence of pathogens and other damage-associated signals.</text>
</comment>
<comment type="PTM">
    <molecule>Caspase recruitment domain-containing protein 8, N-terminus</molecule>
    <text evidence="1">Ubiquitinated by the N-end rule pathway in response to pathogens and other damage-associated signals, leading to its degradation by the proteasome and subsequent release of the cleaved C-terminal part of the protein (Caspase recruitment domain-containing protein 8, C-terminus), which polymerizes and forms the CARD8 inflammasome.</text>
</comment>
<proteinExistence type="evidence at transcript level"/>
<name>CARD8_PONAB</name>
<dbReference type="EC" id="3.4.-.-" evidence="1"/>
<dbReference type="EMBL" id="CR858904">
    <property type="protein sequence ID" value="CAH91103.1"/>
    <property type="molecule type" value="mRNA"/>
</dbReference>
<dbReference type="RefSeq" id="NP_001125643.1">
    <property type="nucleotide sequence ID" value="NM_001132171.1"/>
</dbReference>
<dbReference type="SMR" id="Q5RAV7"/>
<dbReference type="FunCoup" id="Q5RAV7">
    <property type="interactions" value="937"/>
</dbReference>
<dbReference type="STRING" id="9601.ENSPPYP00000011395"/>
<dbReference type="MEROPS" id="S79.001"/>
<dbReference type="Ensembl" id="ENSPPYT00000040900.1">
    <property type="protein sequence ID" value="ENSPPYP00000027845.1"/>
    <property type="gene ID" value="ENSPPYG00000010191.3"/>
</dbReference>
<dbReference type="GeneID" id="100172562"/>
<dbReference type="KEGG" id="pon:100172562"/>
<dbReference type="CTD" id="22900"/>
<dbReference type="GeneTree" id="ENSGT00830000128447"/>
<dbReference type="InParanoid" id="Q5RAV7"/>
<dbReference type="OrthoDB" id="428577at2759"/>
<dbReference type="Proteomes" id="UP000001595">
    <property type="component" value="Chromosome 19"/>
</dbReference>
<dbReference type="GO" id="GO:0072559">
    <property type="term" value="C:NLRP3 inflammasome complex"/>
    <property type="evidence" value="ECO:0000250"/>
    <property type="project" value="UniProtKB"/>
</dbReference>
<dbReference type="GO" id="GO:0005634">
    <property type="term" value="C:nucleus"/>
    <property type="evidence" value="ECO:0007669"/>
    <property type="project" value="UniProtKB-SubCell"/>
</dbReference>
<dbReference type="GO" id="GO:0008656">
    <property type="term" value="F:cysteine-type endopeptidase activator activity involved in apoptotic process"/>
    <property type="evidence" value="ECO:0007669"/>
    <property type="project" value="TreeGrafter"/>
</dbReference>
<dbReference type="GO" id="GO:0008233">
    <property type="term" value="F:peptidase activity"/>
    <property type="evidence" value="ECO:0007669"/>
    <property type="project" value="UniProtKB-KW"/>
</dbReference>
<dbReference type="GO" id="GO:0006954">
    <property type="term" value="P:inflammatory response"/>
    <property type="evidence" value="ECO:0007669"/>
    <property type="project" value="UniProtKB-KW"/>
</dbReference>
<dbReference type="GO" id="GO:0045087">
    <property type="term" value="P:innate immune response"/>
    <property type="evidence" value="ECO:0007669"/>
    <property type="project" value="UniProtKB-KW"/>
</dbReference>
<dbReference type="GO" id="GO:0006508">
    <property type="term" value="P:proteolysis"/>
    <property type="evidence" value="ECO:0007669"/>
    <property type="project" value="UniProtKB-KW"/>
</dbReference>
<dbReference type="GO" id="GO:0042981">
    <property type="term" value="P:regulation of apoptotic process"/>
    <property type="evidence" value="ECO:0007669"/>
    <property type="project" value="InterPro"/>
</dbReference>
<dbReference type="GO" id="GO:0043122">
    <property type="term" value="P:regulation of canonical NF-kappaB signal transduction"/>
    <property type="evidence" value="ECO:0007669"/>
    <property type="project" value="TreeGrafter"/>
</dbReference>
<dbReference type="CDD" id="cd01671">
    <property type="entry name" value="CARD"/>
    <property type="match status" value="1"/>
</dbReference>
<dbReference type="FunFam" id="1.10.533.10:FF:000090">
    <property type="entry name" value="Caspase recruitment domain family member 8"/>
    <property type="match status" value="1"/>
</dbReference>
<dbReference type="Gene3D" id="1.10.533.10">
    <property type="entry name" value="Death Domain, Fas"/>
    <property type="match status" value="1"/>
</dbReference>
<dbReference type="InterPro" id="IPR001315">
    <property type="entry name" value="CARD"/>
</dbReference>
<dbReference type="InterPro" id="IPR011029">
    <property type="entry name" value="DEATH-like_dom_sf"/>
</dbReference>
<dbReference type="InterPro" id="IPR025307">
    <property type="entry name" value="FIIND_dom"/>
</dbReference>
<dbReference type="InterPro" id="IPR051249">
    <property type="entry name" value="NLRP_Inflammasome"/>
</dbReference>
<dbReference type="PANTHER" id="PTHR46985:SF4">
    <property type="entry name" value="CASPASE RECRUITMENT DOMAIN-CONTAINING PROTEIN 8"/>
    <property type="match status" value="1"/>
</dbReference>
<dbReference type="PANTHER" id="PTHR46985">
    <property type="entry name" value="NACHT, LRR AND PYD DOMAINS-CONTAINING PROTEIN 1"/>
    <property type="match status" value="1"/>
</dbReference>
<dbReference type="Pfam" id="PF00619">
    <property type="entry name" value="CARD"/>
    <property type="match status" value="1"/>
</dbReference>
<dbReference type="Pfam" id="PF13553">
    <property type="entry name" value="FIIND"/>
    <property type="match status" value="1"/>
</dbReference>
<dbReference type="Pfam" id="PF23679">
    <property type="entry name" value="UPA-FIIND"/>
    <property type="match status" value="1"/>
</dbReference>
<dbReference type="SUPFAM" id="SSF47986">
    <property type="entry name" value="DEATH domain"/>
    <property type="match status" value="1"/>
</dbReference>
<dbReference type="PROSITE" id="PS50209">
    <property type="entry name" value="CARD"/>
    <property type="match status" value="1"/>
</dbReference>
<dbReference type="PROSITE" id="PS51830">
    <property type="entry name" value="FIIND"/>
    <property type="match status" value="1"/>
</dbReference>
<evidence type="ECO:0000250" key="1">
    <source>
        <dbReference type="UniProtKB" id="Q9Y2G2"/>
    </source>
</evidence>
<evidence type="ECO:0000255" key="2">
    <source>
        <dbReference type="PROSITE-ProRule" id="PRU00046"/>
    </source>
</evidence>
<evidence type="ECO:0000255" key="3">
    <source>
        <dbReference type="PROSITE-ProRule" id="PRU01174"/>
    </source>
</evidence>
<evidence type="ECO:0000256" key="4">
    <source>
        <dbReference type="SAM" id="MobiDB-lite"/>
    </source>
</evidence>
<evidence type="ECO:0000305" key="5"/>
<gene>
    <name evidence="1" type="primary">CARD8</name>
</gene>
<sequence length="427" mass="48186">MGIPTSSVSEEQESSEGQDSGDICSEENQIVSSYASKVCFEIEQDYKNRQFLGPEGNVDVELIDKSTNTYSVRFPTAGWYLWPATGLGFLVRDVVTLTIGFGSWNQHLALDLQHHEQWLVGGPLFDITAEPEEAVAEIHLPHFISLQAGEVDVSWFLIAHFKNEGMVLEHPARVEPFYAVLEKPSFSLMGILLRIASGTRLSIPITSNTLIYYHPHPEDIKFHLYLVPSDALLTKMIDDEEDRFCGVRLQTSPPVEPLNFGARYIVSNSAHLEIIPTELKLSYRSPGEIQHFSKFYAGQMKEPIQLEITEKRHETLVWKTVVKPVDIQLGAASAPPAFSGAAFVKENHRQLQARMGDLKGVLDDLQDNEVLTENEKELVEQAKTRQSKNDTLLTMVEKKGDRALELLFRSISERDPYLVSYLRQQSL</sequence>
<feature type="chain" id="PRO_0000144081" description="Caspase recruitment domain-containing protein 8">
    <location>
        <begin position="1"/>
        <end position="427"/>
    </location>
</feature>
<feature type="chain" id="PRO_0000452849" description="Caspase recruitment domain-containing protein 8, N-terminus" evidence="1">
    <location>
        <begin position="1"/>
        <end position="186"/>
    </location>
</feature>
<feature type="chain" id="PRO_0000452850" description="Caspase recruitment domain-containing protein 8, C-terminus" evidence="1">
    <location>
        <begin position="187"/>
        <end position="427"/>
    </location>
</feature>
<feature type="domain" description="FIIND" evidence="3">
    <location>
        <begin position="51"/>
        <end position="336"/>
    </location>
</feature>
<feature type="domain" description="CARD" evidence="2">
    <location>
        <begin position="336"/>
        <end position="426"/>
    </location>
</feature>
<feature type="region of interest" description="Disordered" evidence="4">
    <location>
        <begin position="1"/>
        <end position="23"/>
    </location>
</feature>
<feature type="region of interest" description="ZU5" evidence="1">
    <location>
        <begin position="51"/>
        <end position="186"/>
    </location>
</feature>
<feature type="region of interest" description="UPA" evidence="1">
    <location>
        <begin position="187"/>
        <end position="336"/>
    </location>
</feature>
<feature type="site" description="Cleavage; by autolysis" evidence="1 3">
    <location>
        <begin position="186"/>
        <end position="187"/>
    </location>
</feature>
<reference key="1">
    <citation type="submission" date="2004-11" db="EMBL/GenBank/DDBJ databases">
        <authorList>
            <consortium name="The German cDNA consortium"/>
        </authorList>
    </citation>
    <scope>NUCLEOTIDE SEQUENCE [LARGE SCALE MRNA]</scope>
    <source>
        <tissue>Heart</tissue>
    </source>
</reference>
<keyword id="KW-0053">Apoptosis</keyword>
<keyword id="KW-0963">Cytoplasm</keyword>
<keyword id="KW-0378">Hydrolase</keyword>
<keyword id="KW-0391">Immunity</keyword>
<keyword id="KW-1271">Inflammasome</keyword>
<keyword id="KW-0395">Inflammatory response</keyword>
<keyword id="KW-0399">Innate immunity</keyword>
<keyword id="KW-1210">Necrosis</keyword>
<keyword id="KW-0539">Nucleus</keyword>
<keyword id="KW-0645">Protease</keyword>
<keyword id="KW-1185">Reference proteome</keyword>
<keyword id="KW-0832">Ubl conjugation</keyword>